<reference key="1">
    <citation type="journal article" date="2005" name="Mol. Phylogenet. Evol.">
        <title>Multigene phylogeny of the Old World mice, Murinae, reveals distinct geographic lineages and the declining utility of mitochondrial genes compared to nuclear genes.</title>
        <authorList>
            <person name="Steppan S.J."/>
            <person name="Adkins R.M."/>
            <person name="Spinks P.Q."/>
            <person name="Hale C."/>
        </authorList>
    </citation>
    <scope>NUCLEOTIDE SEQUENCE [GENOMIC DNA]</scope>
</reference>
<dbReference type="EC" id="7.1.1.9"/>
<dbReference type="EMBL" id="DQ019104">
    <property type="protein sequence ID" value="ABA28403.1"/>
    <property type="molecule type" value="Genomic_DNA"/>
</dbReference>
<dbReference type="SMR" id="Q38RZ7"/>
<dbReference type="GO" id="GO:0005743">
    <property type="term" value="C:mitochondrial inner membrane"/>
    <property type="evidence" value="ECO:0007669"/>
    <property type="project" value="UniProtKB-SubCell"/>
</dbReference>
<dbReference type="GO" id="GO:0045277">
    <property type="term" value="C:respiratory chain complex IV"/>
    <property type="evidence" value="ECO:0000250"/>
    <property type="project" value="UniProtKB"/>
</dbReference>
<dbReference type="GO" id="GO:0005507">
    <property type="term" value="F:copper ion binding"/>
    <property type="evidence" value="ECO:0007669"/>
    <property type="project" value="InterPro"/>
</dbReference>
<dbReference type="GO" id="GO:0004129">
    <property type="term" value="F:cytochrome-c oxidase activity"/>
    <property type="evidence" value="ECO:0007669"/>
    <property type="project" value="UniProtKB-EC"/>
</dbReference>
<dbReference type="GO" id="GO:0042773">
    <property type="term" value="P:ATP synthesis coupled electron transport"/>
    <property type="evidence" value="ECO:0007669"/>
    <property type="project" value="TreeGrafter"/>
</dbReference>
<dbReference type="CDD" id="cd13912">
    <property type="entry name" value="CcO_II_C"/>
    <property type="match status" value="1"/>
</dbReference>
<dbReference type="FunFam" id="1.10.287.90:FF:000001">
    <property type="entry name" value="Cytochrome c oxidase subunit 2"/>
    <property type="match status" value="1"/>
</dbReference>
<dbReference type="FunFam" id="2.60.40.420:FF:000001">
    <property type="entry name" value="Cytochrome c oxidase subunit 2"/>
    <property type="match status" value="1"/>
</dbReference>
<dbReference type="Gene3D" id="1.10.287.90">
    <property type="match status" value="1"/>
</dbReference>
<dbReference type="Gene3D" id="2.60.40.420">
    <property type="entry name" value="Cupredoxins - blue copper proteins"/>
    <property type="match status" value="1"/>
</dbReference>
<dbReference type="InterPro" id="IPR045187">
    <property type="entry name" value="CcO_II"/>
</dbReference>
<dbReference type="InterPro" id="IPR002429">
    <property type="entry name" value="CcO_II-like_C"/>
</dbReference>
<dbReference type="InterPro" id="IPR034210">
    <property type="entry name" value="CcO_II_C"/>
</dbReference>
<dbReference type="InterPro" id="IPR001505">
    <property type="entry name" value="Copper_CuA"/>
</dbReference>
<dbReference type="InterPro" id="IPR008972">
    <property type="entry name" value="Cupredoxin"/>
</dbReference>
<dbReference type="InterPro" id="IPR014222">
    <property type="entry name" value="Cyt_c_oxidase_su2"/>
</dbReference>
<dbReference type="InterPro" id="IPR011759">
    <property type="entry name" value="Cyt_c_oxidase_su2_TM_dom"/>
</dbReference>
<dbReference type="InterPro" id="IPR036257">
    <property type="entry name" value="Cyt_c_oxidase_su2_TM_sf"/>
</dbReference>
<dbReference type="NCBIfam" id="TIGR02866">
    <property type="entry name" value="CoxB"/>
    <property type="match status" value="1"/>
</dbReference>
<dbReference type="PANTHER" id="PTHR22888:SF9">
    <property type="entry name" value="CYTOCHROME C OXIDASE SUBUNIT 2"/>
    <property type="match status" value="1"/>
</dbReference>
<dbReference type="PANTHER" id="PTHR22888">
    <property type="entry name" value="CYTOCHROME C OXIDASE, SUBUNIT II"/>
    <property type="match status" value="1"/>
</dbReference>
<dbReference type="Pfam" id="PF00116">
    <property type="entry name" value="COX2"/>
    <property type="match status" value="1"/>
</dbReference>
<dbReference type="Pfam" id="PF02790">
    <property type="entry name" value="COX2_TM"/>
    <property type="match status" value="1"/>
</dbReference>
<dbReference type="PRINTS" id="PR01166">
    <property type="entry name" value="CYCOXIDASEII"/>
</dbReference>
<dbReference type="SUPFAM" id="SSF49503">
    <property type="entry name" value="Cupredoxins"/>
    <property type="match status" value="1"/>
</dbReference>
<dbReference type="SUPFAM" id="SSF81464">
    <property type="entry name" value="Cytochrome c oxidase subunit II-like, transmembrane region"/>
    <property type="match status" value="1"/>
</dbReference>
<dbReference type="PROSITE" id="PS00078">
    <property type="entry name" value="COX2"/>
    <property type="match status" value="1"/>
</dbReference>
<dbReference type="PROSITE" id="PS50857">
    <property type="entry name" value="COX2_CUA"/>
    <property type="match status" value="1"/>
</dbReference>
<dbReference type="PROSITE" id="PS50999">
    <property type="entry name" value="COX2_TM"/>
    <property type="match status" value="1"/>
</dbReference>
<gene>
    <name type="primary">MT-CO2</name>
    <name type="synonym">COII</name>
    <name type="synonym">COX2</name>
    <name type="synonym">COXII</name>
    <name type="synonym">MTCO2</name>
</gene>
<organism>
    <name type="scientific">Malacomys longipes</name>
    <name type="common">Big-eared swamp rat</name>
    <dbReference type="NCBI Taxonomy" id="112226"/>
    <lineage>
        <taxon>Eukaryota</taxon>
        <taxon>Metazoa</taxon>
        <taxon>Chordata</taxon>
        <taxon>Craniata</taxon>
        <taxon>Vertebrata</taxon>
        <taxon>Euteleostomi</taxon>
        <taxon>Mammalia</taxon>
        <taxon>Eutheria</taxon>
        <taxon>Euarchontoglires</taxon>
        <taxon>Glires</taxon>
        <taxon>Rodentia</taxon>
        <taxon>Myomorpha</taxon>
        <taxon>Muroidea</taxon>
        <taxon>Muridae</taxon>
        <taxon>Murinae</taxon>
        <taxon>Malacomys</taxon>
    </lineage>
</organism>
<keyword id="KW-0186">Copper</keyword>
<keyword id="KW-0249">Electron transport</keyword>
<keyword id="KW-0460">Magnesium</keyword>
<keyword id="KW-0472">Membrane</keyword>
<keyword id="KW-0479">Metal-binding</keyword>
<keyword id="KW-0496">Mitochondrion</keyword>
<keyword id="KW-0999">Mitochondrion inner membrane</keyword>
<keyword id="KW-0679">Respiratory chain</keyword>
<keyword id="KW-1278">Translocase</keyword>
<keyword id="KW-0812">Transmembrane</keyword>
<keyword id="KW-1133">Transmembrane helix</keyword>
<keyword id="KW-0813">Transport</keyword>
<name>COX2_MALLO</name>
<sequence>MAYPFQLGLQDATSPIMEELANFHDHTLMIVFLISSLVLYIISSMLTTKLTHTSTMDAQEVETIWTILPAVILILIALPSLRILYMMDEINNPALTVKTMGHQWYWSYEYTDYEDLCFDSYMVPTNDLKPGDLRLLEVDNRVVLPMELPIRMLISSEDVLHSWAVPSLGLKTDAIPGRLNQATVTSNRPGLFYGQCSEICGSNHSFMPIVLEMVPLKHFENWSASMI</sequence>
<geneLocation type="mitochondrion"/>
<comment type="function">
    <text evidence="2">Component of the cytochrome c oxidase, the last enzyme in the mitochondrial electron transport chain which drives oxidative phosphorylation. The respiratory chain contains 3 multisubunit complexes succinate dehydrogenase (complex II, CII), ubiquinol-cytochrome c oxidoreductase (cytochrome b-c1 complex, complex III, CIII) and cytochrome c oxidase (complex IV, CIV), that cooperate to transfer electrons derived from NADH and succinate to molecular oxygen, creating an electrochemical gradient over the inner membrane that drives transmembrane transport and the ATP synthase. Cytochrome c oxidase is the component of the respiratory chain that catalyzes the reduction of oxygen to water. Electrons originating from reduced cytochrome c in the intermembrane space (IMS) are transferred via the dinuclear copper A center (CU(A)) of subunit 2 and heme A of subunit 1 to the active site in subunit 1, a binuclear center (BNC) formed by heme A3 and copper B (CU(B)). The BNC reduces molecular oxygen to 2 water molecules using 4 electrons from cytochrome c in the IMS and 4 protons from the mitochondrial matrix.</text>
</comment>
<comment type="catalytic activity">
    <reaction evidence="2">
        <text>4 Fe(II)-[cytochrome c] + O2 + 8 H(+)(in) = 4 Fe(III)-[cytochrome c] + 2 H2O + 4 H(+)(out)</text>
        <dbReference type="Rhea" id="RHEA:11436"/>
        <dbReference type="Rhea" id="RHEA-COMP:10350"/>
        <dbReference type="Rhea" id="RHEA-COMP:14399"/>
        <dbReference type="ChEBI" id="CHEBI:15377"/>
        <dbReference type="ChEBI" id="CHEBI:15378"/>
        <dbReference type="ChEBI" id="CHEBI:15379"/>
        <dbReference type="ChEBI" id="CHEBI:29033"/>
        <dbReference type="ChEBI" id="CHEBI:29034"/>
        <dbReference type="EC" id="7.1.1.9"/>
    </reaction>
    <physiologicalReaction direction="left-to-right" evidence="2">
        <dbReference type="Rhea" id="RHEA:11437"/>
    </physiologicalReaction>
</comment>
<comment type="cofactor">
    <cofactor evidence="3">
        <name>Cu cation</name>
        <dbReference type="ChEBI" id="CHEBI:23378"/>
    </cofactor>
    <text evidence="3">Binds a dinuclear copper A center per subunit.</text>
</comment>
<comment type="subunit">
    <text evidence="1 3">Component of the cytochrome c oxidase (complex IV, CIV), a multisubunit enzyme composed of 14 subunits. The complex is composed of a catalytic core of 3 subunits MT-CO1, MT-CO2 and MT-CO3, encoded in the mitochondrial DNA, and 11 supernumerary subunits COX4I, COX5A, COX5B, COX6A, COX6B, COX6C, COX7A, COX7B, COX7C, COX8 and NDUFA4, which are encoded in the nuclear genome. The complex exists as a monomer or a dimer and forms supercomplexes (SCs) in the inner mitochondrial membrane with NADH-ubiquinone oxidoreductase (complex I, CI) and ubiquinol-cytochrome c oxidoreductase (cytochrome b-c1 complex, complex III, CIII), resulting in different assemblies (supercomplex SCI(1)III(2)IV(1) and megacomplex MCI(2)III(2)IV(2)) (By similarity). Found in a complex with TMEM177, COA6, COX18, COX20, SCO1 and SCO2. Interacts with TMEM177 in a COX20-dependent manner. Interacts with COX20. Interacts with COX16 (By similarity).</text>
</comment>
<comment type="subcellular location">
    <subcellularLocation>
        <location evidence="3">Mitochondrion inner membrane</location>
        <topology evidence="3">Multi-pass membrane protein</topology>
    </subcellularLocation>
</comment>
<comment type="similarity">
    <text evidence="4">Belongs to the cytochrome c oxidase subunit 2 family.</text>
</comment>
<evidence type="ECO:0000250" key="1">
    <source>
        <dbReference type="UniProtKB" id="P00403"/>
    </source>
</evidence>
<evidence type="ECO:0000250" key="2">
    <source>
        <dbReference type="UniProtKB" id="P00410"/>
    </source>
</evidence>
<evidence type="ECO:0000250" key="3">
    <source>
        <dbReference type="UniProtKB" id="P68530"/>
    </source>
</evidence>
<evidence type="ECO:0000305" key="4"/>
<protein>
    <recommendedName>
        <fullName>Cytochrome c oxidase subunit 2</fullName>
        <ecNumber>7.1.1.9</ecNumber>
    </recommendedName>
    <alternativeName>
        <fullName>Cytochrome c oxidase polypeptide II</fullName>
    </alternativeName>
</protein>
<feature type="chain" id="PRO_0000254929" description="Cytochrome c oxidase subunit 2">
    <location>
        <begin position="1"/>
        <end position="227"/>
    </location>
</feature>
<feature type="topological domain" description="Mitochondrial intermembrane" evidence="3">
    <location>
        <begin position="1"/>
        <end position="14"/>
    </location>
</feature>
<feature type="transmembrane region" description="Helical; Name=I" evidence="3">
    <location>
        <begin position="15"/>
        <end position="45"/>
    </location>
</feature>
<feature type="topological domain" description="Mitochondrial matrix" evidence="3">
    <location>
        <begin position="46"/>
        <end position="59"/>
    </location>
</feature>
<feature type="transmembrane region" description="Helical; Name=II" evidence="3">
    <location>
        <begin position="60"/>
        <end position="87"/>
    </location>
</feature>
<feature type="topological domain" description="Mitochondrial intermembrane" evidence="3">
    <location>
        <begin position="88"/>
        <end position="227"/>
    </location>
</feature>
<feature type="binding site" evidence="3">
    <location>
        <position position="161"/>
    </location>
    <ligand>
        <name>Cu cation</name>
        <dbReference type="ChEBI" id="CHEBI:23378"/>
        <label>A1</label>
    </ligand>
</feature>
<feature type="binding site" evidence="3">
    <location>
        <position position="196"/>
    </location>
    <ligand>
        <name>Cu cation</name>
        <dbReference type="ChEBI" id="CHEBI:23378"/>
        <label>A1</label>
    </ligand>
</feature>
<feature type="binding site" evidence="3">
    <location>
        <position position="196"/>
    </location>
    <ligand>
        <name>Cu cation</name>
        <dbReference type="ChEBI" id="CHEBI:23378"/>
        <label>A2</label>
    </ligand>
</feature>
<feature type="binding site" evidence="3">
    <location>
        <position position="198"/>
    </location>
    <ligand>
        <name>Cu cation</name>
        <dbReference type="ChEBI" id="CHEBI:23378"/>
        <label>A2</label>
    </ligand>
</feature>
<feature type="binding site" evidence="3">
    <location>
        <position position="198"/>
    </location>
    <ligand>
        <name>Mg(2+)</name>
        <dbReference type="ChEBI" id="CHEBI:18420"/>
        <note>ligand shared with MT-CO1</note>
    </ligand>
</feature>
<feature type="binding site" evidence="3">
    <location>
        <position position="200"/>
    </location>
    <ligand>
        <name>Cu cation</name>
        <dbReference type="ChEBI" id="CHEBI:23378"/>
        <label>A1</label>
    </ligand>
</feature>
<feature type="binding site" evidence="3">
    <location>
        <position position="200"/>
    </location>
    <ligand>
        <name>Cu cation</name>
        <dbReference type="ChEBI" id="CHEBI:23378"/>
        <label>A2</label>
    </ligand>
</feature>
<feature type="binding site" evidence="3">
    <location>
        <position position="204"/>
    </location>
    <ligand>
        <name>Cu cation</name>
        <dbReference type="ChEBI" id="CHEBI:23378"/>
        <label>A2</label>
    </ligand>
</feature>
<feature type="binding site" evidence="3">
    <location>
        <position position="207"/>
    </location>
    <ligand>
        <name>Cu cation</name>
        <dbReference type="ChEBI" id="CHEBI:23378"/>
        <label>A1</label>
    </ligand>
</feature>
<accession>Q38RZ7</accession>
<proteinExistence type="inferred from homology"/>